<sequence length="231" mass="25767">MAEPISLLLVDDEPGVRESVQAFLEDSGDFKVDLAANATEAWDYLQHHLPALVISDIMMPQVDGYQFLQKLREDARFQSLPVVFLTARGMTGDRIQGYQTGCDAFLSKPFDPDELEAIVRNLLARQQASSDAGSESAKLQEIYQEIRALKEQIGQPSGIHTTPSPIKLDFTPREQSVLDLVSQGLMNKEIAAQLKTSVRNVEKYVSRLFTKTGTNSRTELVRFALQHGLTE</sequence>
<accession>P72781</accession>
<reference key="1">
    <citation type="journal article" date="1996" name="DNA Res.">
        <title>Sequence analysis of the genome of the unicellular cyanobacterium Synechocystis sp. strain PCC6803. II. Sequence determination of the entire genome and assignment of potential protein-coding regions.</title>
        <authorList>
            <person name="Kaneko T."/>
            <person name="Sato S."/>
            <person name="Kotani H."/>
            <person name="Tanaka A."/>
            <person name="Asamizu E."/>
            <person name="Nakamura Y."/>
            <person name="Miyajima N."/>
            <person name="Hirosawa M."/>
            <person name="Sugiura M."/>
            <person name="Sasamoto S."/>
            <person name="Kimura T."/>
            <person name="Hosouchi T."/>
            <person name="Matsuno A."/>
            <person name="Muraki A."/>
            <person name="Nakazaki N."/>
            <person name="Naruo K."/>
            <person name="Okumura S."/>
            <person name="Shimpo S."/>
            <person name="Takeuchi C."/>
            <person name="Wada T."/>
            <person name="Watanabe A."/>
            <person name="Yamada M."/>
            <person name="Yasuda M."/>
            <person name="Tabata S."/>
        </authorList>
    </citation>
    <scope>NUCLEOTIDE SEQUENCE [LARGE SCALE GENOMIC DNA]</scope>
    <source>
        <strain>ATCC 27184 / PCC 6803 / Kazusa</strain>
    </source>
</reference>
<reference key="2">
    <citation type="journal article" date="2004" name="J. Biol. Chem.">
        <title>Five histidine kinases perceive osmotic stress and regulate distinct sets of genes in Synechocystis.</title>
        <authorList>
            <person name="Paithoonrangsarid K."/>
            <person name="Shoumskaya M.A."/>
            <person name="Kanesaki Y."/>
            <person name="Satoh S."/>
            <person name="Tabata S."/>
            <person name="Los D.A."/>
            <person name="Zinchenko V.V."/>
            <person name="Hayashi H."/>
            <person name="Tanticharoen M."/>
            <person name="Suzuki I."/>
            <person name="Murata N."/>
        </authorList>
    </citation>
    <scope>FUNCTION IN HYPEROSMOTIC STRESS RESPONSE</scope>
    <scope>REGULON</scope>
    <scope>DISRUPTION PHENOTYPE</scope>
    <source>
        <strain>ATCC 27184 / PCC 6803 / Kazusa</strain>
    </source>
</reference>
<reference key="3">
    <citation type="journal article" date="2005" name="J. Biol. Chem.">
        <title>Identical Hik-Rre systems are involved in perception and transduction of salt signals and hyperosmotic signals but regulate the expression of individual genes to different extents in synechocystis.</title>
        <authorList>
            <person name="Shoumskaya M.A."/>
            <person name="Paithoonrangsarid K."/>
            <person name="Kanesaki Y."/>
            <person name="Los D.A."/>
            <person name="Zinchenko V.V."/>
            <person name="Tanticharoen M."/>
            <person name="Suzuki I."/>
            <person name="Murata N."/>
        </authorList>
    </citation>
    <scope>FUNCTION IN SALT STRESS RESPONSE</scope>
    <scope>REGULON</scope>
    <scope>DISRUPTION PHENOTYPE</scope>
    <source>
        <strain>ATCC 27184 / PCC 6803 / Kazusa</strain>
    </source>
</reference>
<reference key="4">
    <citation type="journal article" date="2009" name="J. Bacteriol.">
        <title>Characterization of an alcohol dehydrogenase from the Cyanobacterium Synechocystis sp. strain PCC 6803 that responds to environmental stress conditions via the Hik34-Rre1 two-component system.</title>
        <authorList>
            <person name="Vidal R."/>
            <person name="Lopez-Maury L."/>
            <person name="Guerrero M.G."/>
            <person name="Florencio F.J."/>
        </authorList>
    </citation>
    <scope>FUNCTION</scope>
    <scope>DISRUPTION PHENOTYPE</scope>
    <scope>DNA-BINDING</scope>
    <source>
        <strain>ATCC 27184 / PCC 6803 / Kazusa</strain>
    </source>
</reference>
<reference key="5">
    <citation type="journal article" date="2015" name="FEMS Microbiol. Lett.">
        <title>Identification of the correct form of the mis-annotated response regulator Rre1 from the cyanobacterium Synechocystis sp. PCC 6803.</title>
        <authorList>
            <person name="Vidal R."/>
        </authorList>
    </citation>
    <scope>SEQUENCE REVISION TO N-TERMINUS</scope>
    <scope>PHOSPHORYLATED BY HIK2</scope>
    <scope>DNA-BINDING</scope>
    <source>
        <strain>ATCC 27184 / PCC 6803 / Kazusa</strain>
    </source>
</reference>
<reference key="6">
    <citation type="journal article" date="2016" name="Front. Plant Sci.">
        <title>A Two-Component Regulatory System in Transcriptional Control of Photosystem Stoichiometry: Redox-Dependent and Sodium Ion-Dependent Phosphoryl Transfer from Cyanobacterial Histidine Kinase Hik2 to Response Regulators Rre1 and RppA.</title>
        <authorList>
            <person name="Ibrahim I.M."/>
            <person name="Puthiyaveetil S."/>
            <person name="Allen J.F."/>
        </authorList>
    </citation>
    <scope>INTERACTION WITH HIK2</scope>
    <source>
        <strain>ATCC 27184 / PCC 6803 / Kazusa</strain>
    </source>
</reference>
<evidence type="ECO:0000255" key="1">
    <source>
        <dbReference type="PROSITE-ProRule" id="PRU00169"/>
    </source>
</evidence>
<evidence type="ECO:0000255" key="2">
    <source>
        <dbReference type="PROSITE-ProRule" id="PRU00411"/>
    </source>
</evidence>
<evidence type="ECO:0000269" key="3">
    <source>
    </source>
</evidence>
<evidence type="ECO:0000269" key="4">
    <source>
    </source>
</evidence>
<evidence type="ECO:0000269" key="5">
    <source>
    </source>
</evidence>
<evidence type="ECO:0000269" key="6">
    <source>
    </source>
</evidence>
<evidence type="ECO:0000269" key="7">
    <source>
    </source>
</evidence>
<evidence type="ECO:0000303" key="8">
    <source>
    </source>
</evidence>
<evidence type="ECO:0000305" key="9">
    <source>
    </source>
</evidence>
<evidence type="ECO:0000305" key="10">
    <source>
    </source>
</evidence>
<evidence type="ECO:0000312" key="11">
    <source>
        <dbReference type="EMBL" id="BAA16796.1"/>
    </source>
</evidence>
<name>RRE1_SYNY3</name>
<keyword id="KW-0238">DNA-binding</keyword>
<keyword id="KW-0597">Phosphoprotein</keyword>
<keyword id="KW-1185">Reference proteome</keyword>
<keyword id="KW-0804">Transcription</keyword>
<keyword id="KW-0805">Transcription regulation</keyword>
<keyword id="KW-0902">Two-component regulatory system</keyword>
<gene>
    <name evidence="8" type="primary">rre1</name>
    <name type="synonym">ycf29</name>
    <name evidence="11" type="ordered locus">slr1783</name>
</gene>
<dbReference type="EMBL" id="BA000022">
    <property type="protein sequence ID" value="BAA16796.1"/>
    <property type="status" value="ALT_INIT"/>
    <property type="molecule type" value="Genomic_DNA"/>
</dbReference>
<dbReference type="PIR" id="S74644">
    <property type="entry name" value="S74644"/>
</dbReference>
<dbReference type="SMR" id="P72781"/>
<dbReference type="IntAct" id="P72781">
    <property type="interactions" value="4"/>
</dbReference>
<dbReference type="STRING" id="1148.gene:10497652"/>
<dbReference type="PaxDb" id="1148-1651869"/>
<dbReference type="EnsemblBacteria" id="BAA16796">
    <property type="protein sequence ID" value="BAA16796"/>
    <property type="gene ID" value="BAA16796"/>
</dbReference>
<dbReference type="KEGG" id="syn:slr1783"/>
<dbReference type="eggNOG" id="COG2197">
    <property type="taxonomic scope" value="Bacteria"/>
</dbReference>
<dbReference type="InParanoid" id="P72781"/>
<dbReference type="PhylomeDB" id="P72781"/>
<dbReference type="Proteomes" id="UP000001425">
    <property type="component" value="Chromosome"/>
</dbReference>
<dbReference type="GO" id="GO:0005829">
    <property type="term" value="C:cytosol"/>
    <property type="evidence" value="ECO:0000318"/>
    <property type="project" value="GO_Central"/>
</dbReference>
<dbReference type="GO" id="GO:0032993">
    <property type="term" value="C:protein-DNA complex"/>
    <property type="evidence" value="ECO:0000318"/>
    <property type="project" value="GO_Central"/>
</dbReference>
<dbReference type="GO" id="GO:0000156">
    <property type="term" value="F:phosphorelay response regulator activity"/>
    <property type="evidence" value="ECO:0000318"/>
    <property type="project" value="GO_Central"/>
</dbReference>
<dbReference type="GO" id="GO:0000976">
    <property type="term" value="F:transcription cis-regulatory region binding"/>
    <property type="evidence" value="ECO:0000318"/>
    <property type="project" value="GO_Central"/>
</dbReference>
<dbReference type="GO" id="GO:0006355">
    <property type="term" value="P:regulation of DNA-templated transcription"/>
    <property type="evidence" value="ECO:0000318"/>
    <property type="project" value="GO_Central"/>
</dbReference>
<dbReference type="CDD" id="cd06170">
    <property type="entry name" value="LuxR_C_like"/>
    <property type="match status" value="1"/>
</dbReference>
<dbReference type="CDD" id="cd19927">
    <property type="entry name" value="REC_Ycf29"/>
    <property type="match status" value="1"/>
</dbReference>
<dbReference type="Gene3D" id="3.40.50.2300">
    <property type="match status" value="1"/>
</dbReference>
<dbReference type="Gene3D" id="1.10.10.10">
    <property type="entry name" value="Winged helix-like DNA-binding domain superfamily/Winged helix DNA-binding domain"/>
    <property type="match status" value="1"/>
</dbReference>
<dbReference type="InterPro" id="IPR011006">
    <property type="entry name" value="CheY-like_superfamily"/>
</dbReference>
<dbReference type="InterPro" id="IPR016032">
    <property type="entry name" value="Sig_transdc_resp-reg_C-effctor"/>
</dbReference>
<dbReference type="InterPro" id="IPR001789">
    <property type="entry name" value="Sig_transdc_resp-reg_receiver"/>
</dbReference>
<dbReference type="InterPro" id="IPR000792">
    <property type="entry name" value="Tscrpt_reg_LuxR_C"/>
</dbReference>
<dbReference type="InterPro" id="IPR039420">
    <property type="entry name" value="WalR-like"/>
</dbReference>
<dbReference type="InterPro" id="IPR036388">
    <property type="entry name" value="WH-like_DNA-bd_sf"/>
</dbReference>
<dbReference type="PANTHER" id="PTHR48111">
    <property type="entry name" value="REGULATOR OF RPOS"/>
    <property type="match status" value="1"/>
</dbReference>
<dbReference type="PANTHER" id="PTHR48111:SF67">
    <property type="entry name" value="TRANSCRIPTIONAL REGULATORY PROTEIN TCTD"/>
    <property type="match status" value="1"/>
</dbReference>
<dbReference type="Pfam" id="PF00196">
    <property type="entry name" value="GerE"/>
    <property type="match status" value="1"/>
</dbReference>
<dbReference type="Pfam" id="PF00072">
    <property type="entry name" value="Response_reg"/>
    <property type="match status" value="1"/>
</dbReference>
<dbReference type="PRINTS" id="PR00038">
    <property type="entry name" value="HTHLUXR"/>
</dbReference>
<dbReference type="SMART" id="SM00421">
    <property type="entry name" value="HTH_LUXR"/>
    <property type="match status" value="1"/>
</dbReference>
<dbReference type="SMART" id="SM00448">
    <property type="entry name" value="REC"/>
    <property type="match status" value="1"/>
</dbReference>
<dbReference type="SUPFAM" id="SSF46894">
    <property type="entry name" value="C-terminal effector domain of the bipartite response regulators"/>
    <property type="match status" value="1"/>
</dbReference>
<dbReference type="SUPFAM" id="SSF52172">
    <property type="entry name" value="CheY-like"/>
    <property type="match status" value="1"/>
</dbReference>
<dbReference type="PROSITE" id="PS50043">
    <property type="entry name" value="HTH_LUXR_2"/>
    <property type="match status" value="1"/>
</dbReference>
<dbReference type="PROSITE" id="PS50110">
    <property type="entry name" value="RESPONSE_REGULATORY"/>
    <property type="match status" value="1"/>
</dbReference>
<feature type="chain" id="PRO_0000453143" description="Response regulator Rre1">
    <location>
        <begin position="1"/>
        <end position="231"/>
    </location>
</feature>
<feature type="domain" description="Response regulatory" evidence="1">
    <location>
        <begin position="6"/>
        <end position="123"/>
    </location>
</feature>
<feature type="domain" description="HTH luxR-type" evidence="2">
    <location>
        <begin position="163"/>
        <end position="228"/>
    </location>
</feature>
<feature type="DNA-binding region" description="H-T-H motif" evidence="2">
    <location>
        <begin position="187"/>
        <end position="206"/>
    </location>
</feature>
<feature type="modified residue" description="4-aspartylphosphate" evidence="1">
    <location>
        <position position="56"/>
    </location>
</feature>
<proteinExistence type="evidence at protein level"/>
<organism>
    <name type="scientific">Synechocystis sp. (strain ATCC 27184 / PCC 6803 / Kazusa)</name>
    <dbReference type="NCBI Taxonomy" id="1111708"/>
    <lineage>
        <taxon>Bacteria</taxon>
        <taxon>Bacillati</taxon>
        <taxon>Cyanobacteriota</taxon>
        <taxon>Cyanophyceae</taxon>
        <taxon>Synechococcales</taxon>
        <taxon>Merismopediaceae</taxon>
        <taxon>Synechocystis</taxon>
    </lineage>
</organism>
<comment type="function">
    <text evidence="4 5 6 7 9">Member of at least 2 two-component regulatory systems Hik2/Rre1 and Hik34/Rre1. Responds to hyperosmotic stress, regulates expression of at least 24 genes including dnaK2 and hspA with Hik34 and sigB (sll0306), sll0528, slr1119, slr0852 and ssr3188 with Hik2 (Probable). Responds to salt stress, regulates expression of at least 24 genes including adhA, dnaK2 and hspA with Hik34 (PubMed:15805106, PubMed:19411329). Binds the adhA promoter (PubMed:19411329). Phosphorylated by Hik2 in vitro (PubMed:25714549, PubMed:26904089). Phosphorylated protein has 10-fold higher affinity for DNA than unphosphorylated protein (PubMed:25714549).</text>
</comment>
<comment type="subunit">
    <text evidence="7">Interacts with histidine kinase Hik2; may accept phosphate from Hik2.</text>
</comment>
<comment type="disruption phenotype">
    <text evidence="3 4 5">Loss or reduction of expression of about 30 genes in response to hyperosmotic (0.5 M sorbitol) or salt (0.5 M NaCl) stress. Most of these genes encode known heat-shock proteins.</text>
</comment>
<comment type="sequence caution" evidence="10">
    <conflict type="erroneous initiation">
        <sequence resource="EMBL-CDS" id="BAA16796"/>
    </conflict>
    <text>Extended N-terminus.</text>
</comment>
<protein>
    <recommendedName>
        <fullName evidence="8">Response regulator Rre1</fullName>
    </recommendedName>
</protein>